<comment type="function">
    <text evidence="1">Catalyzes the reversible adenylation of nicotinate mononucleotide (NaMN) to nicotinic acid adenine dinucleotide (NaAD).</text>
</comment>
<comment type="catalytic activity">
    <reaction evidence="1">
        <text>nicotinate beta-D-ribonucleotide + ATP + H(+) = deamido-NAD(+) + diphosphate</text>
        <dbReference type="Rhea" id="RHEA:22860"/>
        <dbReference type="ChEBI" id="CHEBI:15378"/>
        <dbReference type="ChEBI" id="CHEBI:30616"/>
        <dbReference type="ChEBI" id="CHEBI:33019"/>
        <dbReference type="ChEBI" id="CHEBI:57502"/>
        <dbReference type="ChEBI" id="CHEBI:58437"/>
        <dbReference type="EC" id="2.7.7.18"/>
    </reaction>
</comment>
<comment type="pathway">
    <text evidence="1">Cofactor biosynthesis; NAD(+) biosynthesis; deamido-NAD(+) from nicotinate D-ribonucleotide: step 1/1.</text>
</comment>
<comment type="similarity">
    <text evidence="1">Belongs to the NadD family.</text>
</comment>
<keyword id="KW-0067">ATP-binding</keyword>
<keyword id="KW-0520">NAD</keyword>
<keyword id="KW-0547">Nucleotide-binding</keyword>
<keyword id="KW-0548">Nucleotidyltransferase</keyword>
<keyword id="KW-0662">Pyridine nucleotide biosynthesis</keyword>
<keyword id="KW-1185">Reference proteome</keyword>
<keyword id="KW-0808">Transferase</keyword>
<sequence>MRKVGIMGGTFNPIHFVHLLLAEAAYEQYHLEEIIFLPSKRPAYKPLSELIEEEHRFHMIELAISDNPHFSVSDMEFHREGNTYTADTLLELTKKFPDTEFYFIIGGDSLFELEKWSRPEIVMEKAHIVAAGRDDKDDDQMLQKIMELNEKYKAKIELLRVPMMEVSSRMLRERVKEGQSIRYFLPEAVRSYIIKHGFYL</sequence>
<protein>
    <recommendedName>
        <fullName evidence="1">Probable nicotinate-nucleotide adenylyltransferase</fullName>
        <ecNumber evidence="1">2.7.7.18</ecNumber>
    </recommendedName>
    <alternativeName>
        <fullName evidence="1">Deamido-NAD(+) diphosphorylase</fullName>
    </alternativeName>
    <alternativeName>
        <fullName evidence="1">Deamido-NAD(+) pyrophosphorylase</fullName>
    </alternativeName>
    <alternativeName>
        <fullName evidence="1">Nicotinate mononucleotide adenylyltransferase</fullName>
        <shortName evidence="1">NaMN adenylyltransferase</shortName>
    </alternativeName>
</protein>
<accession>A9KMF3</accession>
<organism>
    <name type="scientific">Lachnoclostridium phytofermentans (strain ATCC 700394 / DSM 18823 / ISDg)</name>
    <name type="common">Clostridium phytofermentans</name>
    <dbReference type="NCBI Taxonomy" id="357809"/>
    <lineage>
        <taxon>Bacteria</taxon>
        <taxon>Bacillati</taxon>
        <taxon>Bacillota</taxon>
        <taxon>Clostridia</taxon>
        <taxon>Lachnospirales</taxon>
        <taxon>Lachnospiraceae</taxon>
    </lineage>
</organism>
<reference key="1">
    <citation type="submission" date="2007-11" db="EMBL/GenBank/DDBJ databases">
        <title>Complete genome sequence of Clostridium phytofermentans ISDg.</title>
        <authorList>
            <person name="Leschine S.B."/>
            <person name="Warnick T.A."/>
            <person name="Blanchard J.L."/>
            <person name="Schnell D.J."/>
            <person name="Petit E.L."/>
            <person name="LaTouf W.G."/>
            <person name="Copeland A."/>
            <person name="Lucas S."/>
            <person name="Lapidus A."/>
            <person name="Barry K."/>
            <person name="Glavina del Rio T."/>
            <person name="Dalin E."/>
            <person name="Tice H."/>
            <person name="Pitluck S."/>
            <person name="Kiss H."/>
            <person name="Brettin T."/>
            <person name="Bruce D."/>
            <person name="Detter J.C."/>
            <person name="Han C."/>
            <person name="Kuske C."/>
            <person name="Schmutz J."/>
            <person name="Larimer F."/>
            <person name="Land M."/>
            <person name="Hauser L."/>
            <person name="Kyrpides N."/>
            <person name="Kim E.A."/>
            <person name="Richardson P."/>
        </authorList>
    </citation>
    <scope>NUCLEOTIDE SEQUENCE [LARGE SCALE GENOMIC DNA]</scope>
    <source>
        <strain>ATCC 700394 / DSM 18823 / ISDg</strain>
    </source>
</reference>
<feature type="chain" id="PRO_1000078376" description="Probable nicotinate-nucleotide adenylyltransferase">
    <location>
        <begin position="1"/>
        <end position="200"/>
    </location>
</feature>
<proteinExistence type="inferred from homology"/>
<evidence type="ECO:0000255" key="1">
    <source>
        <dbReference type="HAMAP-Rule" id="MF_00244"/>
    </source>
</evidence>
<name>NADD_LACP7</name>
<gene>
    <name evidence="1" type="primary">nadD</name>
    <name type="ordered locus">Cphy_2546</name>
</gene>
<dbReference type="EC" id="2.7.7.18" evidence="1"/>
<dbReference type="EMBL" id="CP000885">
    <property type="protein sequence ID" value="ABX42907.1"/>
    <property type="molecule type" value="Genomic_DNA"/>
</dbReference>
<dbReference type="RefSeq" id="WP_012200560.1">
    <property type="nucleotide sequence ID" value="NC_010001.1"/>
</dbReference>
<dbReference type="SMR" id="A9KMF3"/>
<dbReference type="STRING" id="357809.Cphy_2546"/>
<dbReference type="KEGG" id="cpy:Cphy_2546"/>
<dbReference type="eggNOG" id="COG1057">
    <property type="taxonomic scope" value="Bacteria"/>
</dbReference>
<dbReference type="HOGENOM" id="CLU_069765_0_1_9"/>
<dbReference type="OrthoDB" id="5295945at2"/>
<dbReference type="UniPathway" id="UPA00253">
    <property type="reaction ID" value="UER00332"/>
</dbReference>
<dbReference type="Proteomes" id="UP000000370">
    <property type="component" value="Chromosome"/>
</dbReference>
<dbReference type="GO" id="GO:0005524">
    <property type="term" value="F:ATP binding"/>
    <property type="evidence" value="ECO:0007669"/>
    <property type="project" value="UniProtKB-KW"/>
</dbReference>
<dbReference type="GO" id="GO:0004515">
    <property type="term" value="F:nicotinate-nucleotide adenylyltransferase activity"/>
    <property type="evidence" value="ECO:0007669"/>
    <property type="project" value="UniProtKB-UniRule"/>
</dbReference>
<dbReference type="GO" id="GO:0009435">
    <property type="term" value="P:NAD biosynthetic process"/>
    <property type="evidence" value="ECO:0007669"/>
    <property type="project" value="UniProtKB-UniRule"/>
</dbReference>
<dbReference type="CDD" id="cd02165">
    <property type="entry name" value="NMNAT"/>
    <property type="match status" value="1"/>
</dbReference>
<dbReference type="Gene3D" id="3.40.50.620">
    <property type="entry name" value="HUPs"/>
    <property type="match status" value="1"/>
</dbReference>
<dbReference type="HAMAP" id="MF_00244">
    <property type="entry name" value="NaMN_adenylyltr"/>
    <property type="match status" value="1"/>
</dbReference>
<dbReference type="InterPro" id="IPR004821">
    <property type="entry name" value="Cyt_trans-like"/>
</dbReference>
<dbReference type="InterPro" id="IPR005248">
    <property type="entry name" value="NadD/NMNAT"/>
</dbReference>
<dbReference type="InterPro" id="IPR014729">
    <property type="entry name" value="Rossmann-like_a/b/a_fold"/>
</dbReference>
<dbReference type="NCBIfam" id="TIGR00125">
    <property type="entry name" value="cyt_tran_rel"/>
    <property type="match status" value="1"/>
</dbReference>
<dbReference type="NCBIfam" id="TIGR00482">
    <property type="entry name" value="nicotinate (nicotinamide) nucleotide adenylyltransferase"/>
    <property type="match status" value="1"/>
</dbReference>
<dbReference type="NCBIfam" id="NF000840">
    <property type="entry name" value="PRK00071.1-3"/>
    <property type="match status" value="1"/>
</dbReference>
<dbReference type="PANTHER" id="PTHR39321">
    <property type="entry name" value="NICOTINATE-NUCLEOTIDE ADENYLYLTRANSFERASE-RELATED"/>
    <property type="match status" value="1"/>
</dbReference>
<dbReference type="PANTHER" id="PTHR39321:SF3">
    <property type="entry name" value="PHOSPHOPANTETHEINE ADENYLYLTRANSFERASE"/>
    <property type="match status" value="1"/>
</dbReference>
<dbReference type="Pfam" id="PF01467">
    <property type="entry name" value="CTP_transf_like"/>
    <property type="match status" value="1"/>
</dbReference>
<dbReference type="SUPFAM" id="SSF52374">
    <property type="entry name" value="Nucleotidylyl transferase"/>
    <property type="match status" value="1"/>
</dbReference>